<reference key="1">
    <citation type="journal article" date="2001" name="Lancet">
        <title>Whole genome sequencing of meticillin-resistant Staphylococcus aureus.</title>
        <authorList>
            <person name="Kuroda M."/>
            <person name="Ohta T."/>
            <person name="Uchiyama I."/>
            <person name="Baba T."/>
            <person name="Yuzawa H."/>
            <person name="Kobayashi I."/>
            <person name="Cui L."/>
            <person name="Oguchi A."/>
            <person name="Aoki K."/>
            <person name="Nagai Y."/>
            <person name="Lian J.-Q."/>
            <person name="Ito T."/>
            <person name="Kanamori M."/>
            <person name="Matsumaru H."/>
            <person name="Maruyama A."/>
            <person name="Murakami H."/>
            <person name="Hosoyama A."/>
            <person name="Mizutani-Ui Y."/>
            <person name="Takahashi N.K."/>
            <person name="Sawano T."/>
            <person name="Inoue R."/>
            <person name="Kaito C."/>
            <person name="Sekimizu K."/>
            <person name="Hirakawa H."/>
            <person name="Kuhara S."/>
            <person name="Goto S."/>
            <person name="Yabuzaki J."/>
            <person name="Kanehisa M."/>
            <person name="Yamashita A."/>
            <person name="Oshima K."/>
            <person name="Furuya K."/>
            <person name="Yoshino C."/>
            <person name="Shiba T."/>
            <person name="Hattori M."/>
            <person name="Ogasawara N."/>
            <person name="Hayashi H."/>
            <person name="Hiramatsu K."/>
        </authorList>
    </citation>
    <scope>NUCLEOTIDE SEQUENCE [LARGE SCALE GENOMIC DNA]</scope>
    <source>
        <strain>Mu50 / ATCC 700699</strain>
    </source>
</reference>
<evidence type="ECO:0000255" key="1">
    <source>
        <dbReference type="HAMAP-Rule" id="MF_01554"/>
    </source>
</evidence>
<accession>P65704</accession>
<accession>Q99QR5</accession>
<keyword id="KW-0413">Isomerase</keyword>
<keyword id="KW-0460">Magnesium</keyword>
<keyword id="KW-0479">Metal-binding</keyword>
<keyword id="KW-0597">Phosphoprotein</keyword>
<feature type="chain" id="PRO_0000147962" description="Phosphoglucosamine mutase">
    <location>
        <begin position="1"/>
        <end position="451"/>
    </location>
</feature>
<feature type="active site" description="Phosphoserine intermediate" evidence="1">
    <location>
        <position position="102"/>
    </location>
</feature>
<feature type="binding site" description="via phosphate group" evidence="1">
    <location>
        <position position="102"/>
    </location>
    <ligand>
        <name>Mg(2+)</name>
        <dbReference type="ChEBI" id="CHEBI:18420"/>
    </ligand>
</feature>
<feature type="binding site" evidence="1">
    <location>
        <position position="242"/>
    </location>
    <ligand>
        <name>Mg(2+)</name>
        <dbReference type="ChEBI" id="CHEBI:18420"/>
    </ligand>
</feature>
<feature type="binding site" evidence="1">
    <location>
        <position position="244"/>
    </location>
    <ligand>
        <name>Mg(2+)</name>
        <dbReference type="ChEBI" id="CHEBI:18420"/>
    </ligand>
</feature>
<feature type="binding site" evidence="1">
    <location>
        <position position="246"/>
    </location>
    <ligand>
        <name>Mg(2+)</name>
        <dbReference type="ChEBI" id="CHEBI:18420"/>
    </ligand>
</feature>
<feature type="modified residue" description="Phosphoserine" evidence="1">
    <location>
        <position position="102"/>
    </location>
</feature>
<organism>
    <name type="scientific">Staphylococcus aureus (strain Mu50 / ATCC 700699)</name>
    <dbReference type="NCBI Taxonomy" id="158878"/>
    <lineage>
        <taxon>Bacteria</taxon>
        <taxon>Bacillati</taxon>
        <taxon>Bacillota</taxon>
        <taxon>Bacilli</taxon>
        <taxon>Bacillales</taxon>
        <taxon>Staphylococcaceae</taxon>
        <taxon>Staphylococcus</taxon>
    </lineage>
</organism>
<protein>
    <recommendedName>
        <fullName evidence="1">Phosphoglucosamine mutase</fullName>
        <ecNumber evidence="1">5.4.2.10</ecNumber>
    </recommendedName>
</protein>
<comment type="function">
    <text evidence="1">Catalyzes the conversion of glucosamine-6-phosphate to glucosamine-1-phosphate.</text>
</comment>
<comment type="catalytic activity">
    <reaction evidence="1">
        <text>alpha-D-glucosamine 1-phosphate = D-glucosamine 6-phosphate</text>
        <dbReference type="Rhea" id="RHEA:23424"/>
        <dbReference type="ChEBI" id="CHEBI:58516"/>
        <dbReference type="ChEBI" id="CHEBI:58725"/>
        <dbReference type="EC" id="5.4.2.10"/>
    </reaction>
</comment>
<comment type="cofactor">
    <cofactor evidence="1">
        <name>Mg(2+)</name>
        <dbReference type="ChEBI" id="CHEBI:18420"/>
    </cofactor>
    <text evidence="1">Binds 1 Mg(2+) ion per subunit.</text>
</comment>
<comment type="PTM">
    <text evidence="1">Activated by phosphorylation.</text>
</comment>
<comment type="similarity">
    <text evidence="1">Belongs to the phosphohexose mutase family.</text>
</comment>
<gene>
    <name evidence="1" type="primary">glmM</name>
    <name type="synonym">femD</name>
    <name type="ordered locus">SAV2161</name>
</gene>
<dbReference type="EC" id="5.4.2.10" evidence="1"/>
<dbReference type="EMBL" id="BA000017">
    <property type="protein sequence ID" value="BAB58323.1"/>
    <property type="molecule type" value="Genomic_DNA"/>
</dbReference>
<dbReference type="RefSeq" id="WP_000521495.1">
    <property type="nucleotide sequence ID" value="NC_002758.2"/>
</dbReference>
<dbReference type="SMR" id="P65704"/>
<dbReference type="KEGG" id="sav:SAV2161"/>
<dbReference type="HOGENOM" id="CLU_016950_7_0_9"/>
<dbReference type="PhylomeDB" id="P65704"/>
<dbReference type="Proteomes" id="UP000002481">
    <property type="component" value="Chromosome"/>
</dbReference>
<dbReference type="GO" id="GO:0005829">
    <property type="term" value="C:cytosol"/>
    <property type="evidence" value="ECO:0007669"/>
    <property type="project" value="TreeGrafter"/>
</dbReference>
<dbReference type="GO" id="GO:0000287">
    <property type="term" value="F:magnesium ion binding"/>
    <property type="evidence" value="ECO:0007669"/>
    <property type="project" value="UniProtKB-UniRule"/>
</dbReference>
<dbReference type="GO" id="GO:0008966">
    <property type="term" value="F:phosphoglucosamine mutase activity"/>
    <property type="evidence" value="ECO:0007669"/>
    <property type="project" value="UniProtKB-UniRule"/>
</dbReference>
<dbReference type="GO" id="GO:0004615">
    <property type="term" value="F:phosphomannomutase activity"/>
    <property type="evidence" value="ECO:0007669"/>
    <property type="project" value="TreeGrafter"/>
</dbReference>
<dbReference type="GO" id="GO:0005975">
    <property type="term" value="P:carbohydrate metabolic process"/>
    <property type="evidence" value="ECO:0007669"/>
    <property type="project" value="InterPro"/>
</dbReference>
<dbReference type="GO" id="GO:0009252">
    <property type="term" value="P:peptidoglycan biosynthetic process"/>
    <property type="evidence" value="ECO:0007669"/>
    <property type="project" value="TreeGrafter"/>
</dbReference>
<dbReference type="GO" id="GO:0006048">
    <property type="term" value="P:UDP-N-acetylglucosamine biosynthetic process"/>
    <property type="evidence" value="ECO:0007669"/>
    <property type="project" value="TreeGrafter"/>
</dbReference>
<dbReference type="CDD" id="cd05802">
    <property type="entry name" value="GlmM"/>
    <property type="match status" value="1"/>
</dbReference>
<dbReference type="FunFam" id="3.30.310.50:FF:000001">
    <property type="entry name" value="Phosphoglucosamine mutase"/>
    <property type="match status" value="1"/>
</dbReference>
<dbReference type="FunFam" id="3.40.120.10:FF:000001">
    <property type="entry name" value="Phosphoglucosamine mutase"/>
    <property type="match status" value="1"/>
</dbReference>
<dbReference type="FunFam" id="3.40.120.10:FF:000002">
    <property type="entry name" value="Phosphoglucosamine mutase"/>
    <property type="match status" value="1"/>
</dbReference>
<dbReference type="Gene3D" id="3.40.120.10">
    <property type="entry name" value="Alpha-D-Glucose-1,6-Bisphosphate, subunit A, domain 3"/>
    <property type="match status" value="3"/>
</dbReference>
<dbReference type="Gene3D" id="3.30.310.50">
    <property type="entry name" value="Alpha-D-phosphohexomutase, C-terminal domain"/>
    <property type="match status" value="1"/>
</dbReference>
<dbReference type="HAMAP" id="MF_01554_B">
    <property type="entry name" value="GlmM_B"/>
    <property type="match status" value="1"/>
</dbReference>
<dbReference type="InterPro" id="IPR005844">
    <property type="entry name" value="A-D-PHexomutase_a/b/a-I"/>
</dbReference>
<dbReference type="InterPro" id="IPR016055">
    <property type="entry name" value="A-D-PHexomutase_a/b/a-I/II/III"/>
</dbReference>
<dbReference type="InterPro" id="IPR005845">
    <property type="entry name" value="A-D-PHexomutase_a/b/a-II"/>
</dbReference>
<dbReference type="InterPro" id="IPR005846">
    <property type="entry name" value="A-D-PHexomutase_a/b/a-III"/>
</dbReference>
<dbReference type="InterPro" id="IPR005843">
    <property type="entry name" value="A-D-PHexomutase_C"/>
</dbReference>
<dbReference type="InterPro" id="IPR036900">
    <property type="entry name" value="A-D-PHexomutase_C_sf"/>
</dbReference>
<dbReference type="InterPro" id="IPR016066">
    <property type="entry name" value="A-D-PHexomutase_CS"/>
</dbReference>
<dbReference type="InterPro" id="IPR005841">
    <property type="entry name" value="Alpha-D-phosphohexomutase_SF"/>
</dbReference>
<dbReference type="InterPro" id="IPR006352">
    <property type="entry name" value="GlmM_bact"/>
</dbReference>
<dbReference type="InterPro" id="IPR050060">
    <property type="entry name" value="Phosphoglucosamine_mutase"/>
</dbReference>
<dbReference type="NCBIfam" id="TIGR01455">
    <property type="entry name" value="glmM"/>
    <property type="match status" value="1"/>
</dbReference>
<dbReference type="NCBIfam" id="NF008139">
    <property type="entry name" value="PRK10887.1"/>
    <property type="match status" value="1"/>
</dbReference>
<dbReference type="PANTHER" id="PTHR42946:SF1">
    <property type="entry name" value="PHOSPHOGLUCOMUTASE (ALPHA-D-GLUCOSE-1,6-BISPHOSPHATE-DEPENDENT)"/>
    <property type="match status" value="1"/>
</dbReference>
<dbReference type="PANTHER" id="PTHR42946">
    <property type="entry name" value="PHOSPHOHEXOSE MUTASE"/>
    <property type="match status" value="1"/>
</dbReference>
<dbReference type="Pfam" id="PF02878">
    <property type="entry name" value="PGM_PMM_I"/>
    <property type="match status" value="1"/>
</dbReference>
<dbReference type="Pfam" id="PF02879">
    <property type="entry name" value="PGM_PMM_II"/>
    <property type="match status" value="1"/>
</dbReference>
<dbReference type="Pfam" id="PF02880">
    <property type="entry name" value="PGM_PMM_III"/>
    <property type="match status" value="1"/>
</dbReference>
<dbReference type="Pfam" id="PF00408">
    <property type="entry name" value="PGM_PMM_IV"/>
    <property type="match status" value="1"/>
</dbReference>
<dbReference type="PRINTS" id="PR00509">
    <property type="entry name" value="PGMPMM"/>
</dbReference>
<dbReference type="SUPFAM" id="SSF55957">
    <property type="entry name" value="Phosphoglucomutase, C-terminal domain"/>
    <property type="match status" value="1"/>
</dbReference>
<dbReference type="SUPFAM" id="SSF53738">
    <property type="entry name" value="Phosphoglucomutase, first 3 domains"/>
    <property type="match status" value="3"/>
</dbReference>
<dbReference type="PROSITE" id="PS00710">
    <property type="entry name" value="PGM_PMM"/>
    <property type="match status" value="1"/>
</dbReference>
<name>GLMM_STAAM</name>
<sequence length="451" mass="49294">MGKYFGTDGVRGVANQELTPELAFKLGRYGGYVLAHNKGEKHPRVLVGRDTRVSGEMLESALIAGLISIGAEVMRLGIISTPGVAYLTRDMGAELGVMISASHNPVADNGIKFFGSDGFKLSDEQENEIEALLDQENPELPRPVGNDIVHYSDYFEGAQKYLSYLKSTVDVNFEGLKIVLDGANGSTSSLAPFLFGDLEADTETIGCSPDGYNINEKCGSTHPEKLAEKVVETESDFGLAFDGDGDRIIAVDENGQIVDGDQIMFIIGQEMHKNQELNNDMIVSTVMSNLGFYKALEQEGIKSNKTKVGDRYVVEEMRRGNYNLGGEQSGHIVMMDYNTTGDGLLTGIQLASVIKMTGKSLSELAGQMKKYPQSLINVRVTDKYRVEENVDVKEVMTKVEVEMNGEGRILVRPSGTEPLVRVMVEAATDEDAERFAQQIADVVQDKMGLDK</sequence>
<proteinExistence type="inferred from homology"/>